<keyword id="KW-0474">Menaquinone biosynthesis</keyword>
<keyword id="KW-0489">Methyltransferase</keyword>
<keyword id="KW-0949">S-adenosyl-L-methionine</keyword>
<keyword id="KW-0808">Transferase</keyword>
<keyword id="KW-0831">Ubiquinone biosynthesis</keyword>
<accession>P0A2K6</accession>
<accession>Q9L6M6</accession>
<evidence type="ECO:0000255" key="1">
    <source>
        <dbReference type="HAMAP-Rule" id="MF_01813"/>
    </source>
</evidence>
<dbReference type="EC" id="2.1.1.163" evidence="1"/>
<dbReference type="EC" id="2.1.1.201" evidence="1"/>
<dbReference type="EMBL" id="AL513382">
    <property type="protein sequence ID" value="CAD07922.1"/>
    <property type="molecule type" value="Genomic_DNA"/>
</dbReference>
<dbReference type="EMBL" id="AE014613">
    <property type="protein sequence ID" value="AAO70855.1"/>
    <property type="molecule type" value="Genomic_DNA"/>
</dbReference>
<dbReference type="RefSeq" id="NP_457781.1">
    <property type="nucleotide sequence ID" value="NC_003198.1"/>
</dbReference>
<dbReference type="RefSeq" id="WP_000229009.1">
    <property type="nucleotide sequence ID" value="NZ_WSUR01000033.1"/>
</dbReference>
<dbReference type="SMR" id="P0A2K6"/>
<dbReference type="STRING" id="220341.gene:17587441"/>
<dbReference type="KEGG" id="stt:t3327"/>
<dbReference type="KEGG" id="sty:STY3589"/>
<dbReference type="PATRIC" id="fig|220341.7.peg.3656"/>
<dbReference type="eggNOG" id="COG2226">
    <property type="taxonomic scope" value="Bacteria"/>
</dbReference>
<dbReference type="HOGENOM" id="CLU_037990_0_0_6"/>
<dbReference type="OMA" id="MNDVMSM"/>
<dbReference type="OrthoDB" id="9808140at2"/>
<dbReference type="UniPathway" id="UPA00079">
    <property type="reaction ID" value="UER00169"/>
</dbReference>
<dbReference type="UniPathway" id="UPA00232"/>
<dbReference type="Proteomes" id="UP000000541">
    <property type="component" value="Chromosome"/>
</dbReference>
<dbReference type="Proteomes" id="UP000002670">
    <property type="component" value="Chromosome"/>
</dbReference>
<dbReference type="GO" id="GO:0008425">
    <property type="term" value="F:2-methoxy-6-polyprenyl-1,4-benzoquinol methyltransferase activity"/>
    <property type="evidence" value="ECO:0007669"/>
    <property type="project" value="UniProtKB-UniRule"/>
</dbReference>
<dbReference type="GO" id="GO:0043770">
    <property type="term" value="F:demethylmenaquinone methyltransferase activity"/>
    <property type="evidence" value="ECO:0007669"/>
    <property type="project" value="UniProtKB-UniRule"/>
</dbReference>
<dbReference type="GO" id="GO:0009060">
    <property type="term" value="P:aerobic respiration"/>
    <property type="evidence" value="ECO:0007669"/>
    <property type="project" value="UniProtKB-UniRule"/>
</dbReference>
<dbReference type="GO" id="GO:0009234">
    <property type="term" value="P:menaquinone biosynthetic process"/>
    <property type="evidence" value="ECO:0007669"/>
    <property type="project" value="UniProtKB-UniRule"/>
</dbReference>
<dbReference type="GO" id="GO:0032259">
    <property type="term" value="P:methylation"/>
    <property type="evidence" value="ECO:0007669"/>
    <property type="project" value="UniProtKB-KW"/>
</dbReference>
<dbReference type="CDD" id="cd02440">
    <property type="entry name" value="AdoMet_MTases"/>
    <property type="match status" value="1"/>
</dbReference>
<dbReference type="FunFam" id="3.40.50.150:FF:000014">
    <property type="entry name" value="Ubiquinone/menaquinone biosynthesis C-methyltransferase UbiE"/>
    <property type="match status" value="1"/>
</dbReference>
<dbReference type="Gene3D" id="3.40.50.150">
    <property type="entry name" value="Vaccinia Virus protein VP39"/>
    <property type="match status" value="1"/>
</dbReference>
<dbReference type="HAMAP" id="MF_01813">
    <property type="entry name" value="MenG_UbiE_methyltr"/>
    <property type="match status" value="1"/>
</dbReference>
<dbReference type="InterPro" id="IPR029063">
    <property type="entry name" value="SAM-dependent_MTases_sf"/>
</dbReference>
<dbReference type="InterPro" id="IPR004033">
    <property type="entry name" value="UbiE/COQ5_MeTrFase"/>
</dbReference>
<dbReference type="InterPro" id="IPR023576">
    <property type="entry name" value="UbiE/COQ5_MeTrFase_CS"/>
</dbReference>
<dbReference type="NCBIfam" id="TIGR01934">
    <property type="entry name" value="MenG_MenH_UbiE"/>
    <property type="match status" value="1"/>
</dbReference>
<dbReference type="NCBIfam" id="NF001240">
    <property type="entry name" value="PRK00216.1-1"/>
    <property type="match status" value="1"/>
</dbReference>
<dbReference type="NCBIfam" id="NF001242">
    <property type="entry name" value="PRK00216.1-3"/>
    <property type="match status" value="1"/>
</dbReference>
<dbReference type="NCBIfam" id="NF001244">
    <property type="entry name" value="PRK00216.1-5"/>
    <property type="match status" value="1"/>
</dbReference>
<dbReference type="PANTHER" id="PTHR43591:SF24">
    <property type="entry name" value="2-METHOXY-6-POLYPRENYL-1,4-BENZOQUINOL METHYLASE, MITOCHONDRIAL"/>
    <property type="match status" value="1"/>
</dbReference>
<dbReference type="PANTHER" id="PTHR43591">
    <property type="entry name" value="METHYLTRANSFERASE"/>
    <property type="match status" value="1"/>
</dbReference>
<dbReference type="Pfam" id="PF01209">
    <property type="entry name" value="Ubie_methyltran"/>
    <property type="match status" value="1"/>
</dbReference>
<dbReference type="SUPFAM" id="SSF53335">
    <property type="entry name" value="S-adenosyl-L-methionine-dependent methyltransferases"/>
    <property type="match status" value="1"/>
</dbReference>
<dbReference type="PROSITE" id="PS51608">
    <property type="entry name" value="SAM_MT_UBIE"/>
    <property type="match status" value="1"/>
</dbReference>
<dbReference type="PROSITE" id="PS01183">
    <property type="entry name" value="UBIE_1"/>
    <property type="match status" value="1"/>
</dbReference>
<dbReference type="PROSITE" id="PS01184">
    <property type="entry name" value="UBIE_2"/>
    <property type="match status" value="1"/>
</dbReference>
<proteinExistence type="inferred from homology"/>
<feature type="chain" id="PRO_0000193323" description="Ubiquinone/menaquinone biosynthesis C-methyltransferase UbiE">
    <location>
        <begin position="1"/>
        <end position="251"/>
    </location>
</feature>
<feature type="binding site" evidence="1">
    <location>
        <position position="74"/>
    </location>
    <ligand>
        <name>S-adenosyl-L-methionine</name>
        <dbReference type="ChEBI" id="CHEBI:59789"/>
    </ligand>
</feature>
<feature type="binding site" evidence="1">
    <location>
        <position position="95"/>
    </location>
    <ligand>
        <name>S-adenosyl-L-methionine</name>
        <dbReference type="ChEBI" id="CHEBI:59789"/>
    </ligand>
</feature>
<feature type="binding site" evidence="1">
    <location>
        <begin position="123"/>
        <end position="124"/>
    </location>
    <ligand>
        <name>S-adenosyl-L-methionine</name>
        <dbReference type="ChEBI" id="CHEBI:59789"/>
    </ligand>
</feature>
<feature type="binding site" evidence="1">
    <location>
        <position position="140"/>
    </location>
    <ligand>
        <name>S-adenosyl-L-methionine</name>
        <dbReference type="ChEBI" id="CHEBI:59789"/>
    </ligand>
</feature>
<sequence length="251" mass="28136">MVEDSQETTHFGFQTVAKEQKADMVAHVFHSVASKYDVMNDLMSFGIHRLWKRFTIDCSGVRRGQTVLDLAGGTGDLTAKFSRMVGETGKVILADINDSMLKMGREKLRNIGVIGNVEYVQANAEALPFPDNTFDCITISFGLRNVTEKEKALRSMFRVLKPGGRLLVLEFSKPIIEPLSKAYDAYSFHILPRIGSMVANDADSYRYLAESIRMHPDQDTLKAMMQDAGFESVDYYNLTAGVVALHRGYKF</sequence>
<comment type="function">
    <text evidence="1">Methyltransferase required for the conversion of demethylmenaquinol (DMKH2) to menaquinol (MKH2) and the conversion of 2-polyprenyl-6-methoxy-1,4-benzoquinol (DDMQH2) to 2-polyprenyl-3-methyl-6-methoxy-1,4-benzoquinol (DMQH2).</text>
</comment>
<comment type="catalytic activity">
    <reaction evidence="1">
        <text>a 2-demethylmenaquinol + S-adenosyl-L-methionine = a menaquinol + S-adenosyl-L-homocysteine + H(+)</text>
        <dbReference type="Rhea" id="RHEA:42640"/>
        <dbReference type="Rhea" id="RHEA-COMP:9539"/>
        <dbReference type="Rhea" id="RHEA-COMP:9563"/>
        <dbReference type="ChEBI" id="CHEBI:15378"/>
        <dbReference type="ChEBI" id="CHEBI:18151"/>
        <dbReference type="ChEBI" id="CHEBI:55437"/>
        <dbReference type="ChEBI" id="CHEBI:57856"/>
        <dbReference type="ChEBI" id="CHEBI:59789"/>
        <dbReference type="EC" id="2.1.1.163"/>
    </reaction>
</comment>
<comment type="catalytic activity">
    <reaction evidence="1">
        <text>a 2-methoxy-6-(all-trans-polyprenyl)benzene-1,4-diol + S-adenosyl-L-methionine = a 5-methoxy-2-methyl-3-(all-trans-polyprenyl)benzene-1,4-diol + S-adenosyl-L-homocysteine + H(+)</text>
        <dbReference type="Rhea" id="RHEA:28286"/>
        <dbReference type="Rhea" id="RHEA-COMP:10858"/>
        <dbReference type="Rhea" id="RHEA-COMP:10859"/>
        <dbReference type="ChEBI" id="CHEBI:15378"/>
        <dbReference type="ChEBI" id="CHEBI:57856"/>
        <dbReference type="ChEBI" id="CHEBI:59789"/>
        <dbReference type="ChEBI" id="CHEBI:84166"/>
        <dbReference type="ChEBI" id="CHEBI:84167"/>
        <dbReference type="EC" id="2.1.1.201"/>
    </reaction>
</comment>
<comment type="pathway">
    <text evidence="1">Quinol/quinone metabolism; menaquinone biosynthesis; menaquinol from 1,4-dihydroxy-2-naphthoate: step 2/2.</text>
</comment>
<comment type="pathway">
    <text evidence="1">Cofactor biosynthesis; ubiquinone biosynthesis.</text>
</comment>
<comment type="similarity">
    <text evidence="1">Belongs to the class I-like SAM-binding methyltransferase superfamily. MenG/UbiE family.</text>
</comment>
<organism>
    <name type="scientific">Salmonella typhi</name>
    <dbReference type="NCBI Taxonomy" id="90370"/>
    <lineage>
        <taxon>Bacteria</taxon>
        <taxon>Pseudomonadati</taxon>
        <taxon>Pseudomonadota</taxon>
        <taxon>Gammaproteobacteria</taxon>
        <taxon>Enterobacterales</taxon>
        <taxon>Enterobacteriaceae</taxon>
        <taxon>Salmonella</taxon>
    </lineage>
</organism>
<gene>
    <name evidence="1" type="primary">ubiE</name>
    <name type="ordered locus">STY3589</name>
    <name type="ordered locus">t3327</name>
</gene>
<name>UBIE_SALTI</name>
<protein>
    <recommendedName>
        <fullName evidence="1">Ubiquinone/menaquinone biosynthesis C-methyltransferase UbiE</fullName>
        <ecNumber evidence="1">2.1.1.163</ecNumber>
        <ecNumber evidence="1">2.1.1.201</ecNumber>
    </recommendedName>
    <alternativeName>
        <fullName evidence="1">2-methoxy-6-polyprenyl-1,4-benzoquinol methylase</fullName>
    </alternativeName>
    <alternativeName>
        <fullName evidence="1">Demethylmenaquinone methyltransferase</fullName>
    </alternativeName>
</protein>
<reference key="1">
    <citation type="journal article" date="2001" name="Nature">
        <title>Complete genome sequence of a multiple drug resistant Salmonella enterica serovar Typhi CT18.</title>
        <authorList>
            <person name="Parkhill J."/>
            <person name="Dougan G."/>
            <person name="James K.D."/>
            <person name="Thomson N.R."/>
            <person name="Pickard D."/>
            <person name="Wain J."/>
            <person name="Churcher C.M."/>
            <person name="Mungall K.L."/>
            <person name="Bentley S.D."/>
            <person name="Holden M.T.G."/>
            <person name="Sebaihia M."/>
            <person name="Baker S."/>
            <person name="Basham D."/>
            <person name="Brooks K."/>
            <person name="Chillingworth T."/>
            <person name="Connerton P."/>
            <person name="Cronin A."/>
            <person name="Davis P."/>
            <person name="Davies R.M."/>
            <person name="Dowd L."/>
            <person name="White N."/>
            <person name="Farrar J."/>
            <person name="Feltwell T."/>
            <person name="Hamlin N."/>
            <person name="Haque A."/>
            <person name="Hien T.T."/>
            <person name="Holroyd S."/>
            <person name="Jagels K."/>
            <person name="Krogh A."/>
            <person name="Larsen T.S."/>
            <person name="Leather S."/>
            <person name="Moule S."/>
            <person name="O'Gaora P."/>
            <person name="Parry C."/>
            <person name="Quail M.A."/>
            <person name="Rutherford K.M."/>
            <person name="Simmonds M."/>
            <person name="Skelton J."/>
            <person name="Stevens K."/>
            <person name="Whitehead S."/>
            <person name="Barrell B.G."/>
        </authorList>
    </citation>
    <scope>NUCLEOTIDE SEQUENCE [LARGE SCALE GENOMIC DNA]</scope>
    <source>
        <strain>CT18</strain>
    </source>
</reference>
<reference key="2">
    <citation type="journal article" date="2003" name="J. Bacteriol.">
        <title>Comparative genomics of Salmonella enterica serovar Typhi strains Ty2 and CT18.</title>
        <authorList>
            <person name="Deng W."/>
            <person name="Liou S.-R."/>
            <person name="Plunkett G. III"/>
            <person name="Mayhew G.F."/>
            <person name="Rose D.J."/>
            <person name="Burland V."/>
            <person name="Kodoyianni V."/>
            <person name="Schwartz D.C."/>
            <person name="Blattner F.R."/>
        </authorList>
    </citation>
    <scope>NUCLEOTIDE SEQUENCE [LARGE SCALE GENOMIC DNA]</scope>
    <source>
        <strain>ATCC 700931 / Ty2</strain>
    </source>
</reference>